<accession>Q9MYM4</accession>
<gene>
    <name type="primary">GAA</name>
</gene>
<name>LYAG_BOVIN</name>
<protein>
    <recommendedName>
        <fullName>Lysosomal alpha-glucosidase</fullName>
        <ecNumber evidence="2">3.2.1.20</ecNumber>
    </recommendedName>
    <alternativeName>
        <fullName>Acid maltase</fullName>
    </alternativeName>
</protein>
<organism>
    <name type="scientific">Bos taurus</name>
    <name type="common">Bovine</name>
    <dbReference type="NCBI Taxonomy" id="9913"/>
    <lineage>
        <taxon>Eukaryota</taxon>
        <taxon>Metazoa</taxon>
        <taxon>Chordata</taxon>
        <taxon>Craniata</taxon>
        <taxon>Vertebrata</taxon>
        <taxon>Euteleostomi</taxon>
        <taxon>Mammalia</taxon>
        <taxon>Eutheria</taxon>
        <taxon>Laurasiatheria</taxon>
        <taxon>Artiodactyla</taxon>
        <taxon>Ruminantia</taxon>
        <taxon>Pecora</taxon>
        <taxon>Bovidae</taxon>
        <taxon>Bovinae</taxon>
        <taxon>Bos</taxon>
    </lineage>
</organism>
<feature type="signal peptide" evidence="3">
    <location>
        <begin position="1"/>
        <end position="23"/>
    </location>
</feature>
<feature type="propeptide" id="PRO_0000260438" evidence="3">
    <location>
        <begin position="24"/>
        <end position="60"/>
    </location>
</feature>
<feature type="chain" id="PRO_0000260439" description="Lysosomal alpha-glucosidase">
    <location>
        <begin position="61"/>
        <end position="937"/>
    </location>
</feature>
<feature type="domain" description="P-type" evidence="4">
    <location>
        <begin position="68"/>
        <end position="118"/>
    </location>
</feature>
<feature type="active site" description="Nucleophile" evidence="5">
    <location>
        <position position="505"/>
    </location>
</feature>
<feature type="active site" evidence="1">
    <location>
        <position position="508"/>
    </location>
</feature>
<feature type="binding site" evidence="2">
    <location>
        <position position="391"/>
    </location>
    <ligand>
        <name>substrate</name>
    </ligand>
</feature>
<feature type="binding site" evidence="2">
    <location>
        <position position="587"/>
    </location>
    <ligand>
        <name>substrate</name>
    </ligand>
</feature>
<feature type="binding site" evidence="2">
    <location>
        <position position="603"/>
    </location>
    <ligand>
        <name>substrate</name>
    </ligand>
</feature>
<feature type="binding site" evidence="2">
    <location>
        <position position="661"/>
    </location>
    <ligand>
        <name>substrate</name>
    </ligand>
</feature>
<feature type="glycosylation site" description="N-linked (GlcNAc...) asparagine" evidence="3">
    <location>
        <position position="127"/>
    </location>
</feature>
<feature type="glycosylation site" description="N-linked (GlcNAc...) asparagine" evidence="3">
    <location>
        <position position="220"/>
    </location>
</feature>
<feature type="glycosylation site" description="N-linked (GlcNAc...) asparagine" evidence="3">
    <location>
        <position position="259"/>
    </location>
</feature>
<feature type="glycosylation site" description="N-linked (GlcNAc...) asparagine" evidence="3">
    <location>
        <position position="377"/>
    </location>
</feature>
<feature type="glycosylation site" description="N-linked (GlcNAc...) asparagine" evidence="3">
    <location>
        <position position="457"/>
    </location>
</feature>
<feature type="glycosylation site" description="N-linked (GlcNAc...) asparagine" evidence="3">
    <location>
        <position position="639"/>
    </location>
</feature>
<feature type="glycosylation site" description="N-linked (GlcNAc...) asparagine" evidence="3">
    <location>
        <position position="867"/>
    </location>
</feature>
<feature type="glycosylation site" description="N-linked (GlcNAc...) asparagine" evidence="3">
    <location>
        <position position="888"/>
    </location>
</feature>
<feature type="glycosylation site" description="N-linked (GlcNAc...) asparagine" evidence="3">
    <location>
        <position position="910"/>
    </location>
</feature>
<feature type="disulfide bond" evidence="4">
    <location>
        <begin position="70"/>
        <end position="97"/>
    </location>
</feature>
<feature type="disulfide bond" evidence="4">
    <location>
        <begin position="80"/>
        <end position="96"/>
    </location>
</feature>
<feature type="disulfide bond" evidence="4">
    <location>
        <begin position="91"/>
        <end position="114"/>
    </location>
</feature>
<feature type="disulfide bond" evidence="2">
    <location>
        <begin position="520"/>
        <end position="545"/>
    </location>
</feature>
<feature type="disulfide bond" evidence="2">
    <location>
        <begin position="634"/>
        <end position="645"/>
    </location>
</feature>
<feature type="sequence variant" evidence="6">
    <original>W</original>
    <variation>R</variation>
    <location>
        <position position="103"/>
    </location>
</feature>
<feature type="sequence variant" evidence="6">
    <original>V</original>
    <variation>I</variation>
    <location>
        <position position="208"/>
    </location>
</feature>
<feature type="sequence variant" description="70% to 80% decrease in activity." evidence="6">
    <original>R</original>
    <variation>W</variation>
    <location>
        <position position="451"/>
    </location>
</feature>
<feature type="sequence variant" evidence="6">
    <original>R</original>
    <variation>G</variation>
    <location>
        <position position="702"/>
    </location>
</feature>
<feature type="sequence variant" evidence="6">
    <original>L</original>
    <variation>F</variation>
    <location>
        <position position="779"/>
    </location>
</feature>
<feature type="sequence variant" evidence="6">
    <original>H</original>
    <variation>P</variation>
    <location>
        <position position="825"/>
    </location>
</feature>
<reference key="1">
    <citation type="journal article" date="2000" name="Mamm. Genome">
        <title>The bovine alpha-glucosidase gene: coding region, genomic structure, and mutations that cause bovine generalized glycogenosis.</title>
        <authorList>
            <person name="Dennis J.A."/>
            <person name="Moran C."/>
            <person name="Healy P.J."/>
        </authorList>
    </citation>
    <scope>NUCLEOTIDE SEQUENCE [GENOMIC DNA / MRNA]</scope>
    <scope>FUNCTION</scope>
    <scope>VARIANTS ARG-103; ILE-208; TRP-451; GLY-702; PHE-779 AND PRO-825</scope>
    <scope>INVOLVEMENT IN GENERALIZED GLYCOGENOSIS</scope>
    <source>
        <strain>Brahman</strain>
        <strain>Poll Shorthorn</strain>
    </source>
</reference>
<dbReference type="EC" id="3.2.1.20" evidence="2"/>
<dbReference type="EMBL" id="AF171665">
    <property type="protein sequence ID" value="AAF81636.1"/>
    <property type="molecule type" value="mRNA"/>
</dbReference>
<dbReference type="EMBL" id="AF171666">
    <property type="protein sequence ID" value="AAF81637.1"/>
    <property type="molecule type" value="Genomic_DNA"/>
</dbReference>
<dbReference type="RefSeq" id="NP_776338.1">
    <property type="nucleotide sequence ID" value="NM_173913.2"/>
</dbReference>
<dbReference type="RefSeq" id="XP_005221193.1">
    <property type="nucleotide sequence ID" value="XM_005221136.5"/>
</dbReference>
<dbReference type="RefSeq" id="XP_024835302.1">
    <property type="nucleotide sequence ID" value="XM_024979534.2"/>
</dbReference>
<dbReference type="SMR" id="Q9MYM4"/>
<dbReference type="FunCoup" id="Q9MYM4">
    <property type="interactions" value="950"/>
</dbReference>
<dbReference type="STRING" id="9913.ENSBTAP00000021325"/>
<dbReference type="BindingDB" id="Q9MYM4"/>
<dbReference type="ChEMBL" id="CHEMBL2974"/>
<dbReference type="CAZy" id="GH31">
    <property type="family name" value="Glycoside Hydrolase Family 31"/>
</dbReference>
<dbReference type="GlyCosmos" id="Q9MYM4">
    <property type="glycosylation" value="9 sites, No reported glycans"/>
</dbReference>
<dbReference type="GlyGen" id="Q9MYM4">
    <property type="glycosylation" value="9 sites"/>
</dbReference>
<dbReference type="PaxDb" id="9913-ENSBTAP00000021325"/>
<dbReference type="PeptideAtlas" id="Q9MYM4"/>
<dbReference type="GeneID" id="280798"/>
<dbReference type="KEGG" id="bta:280798"/>
<dbReference type="CTD" id="2548"/>
<dbReference type="VEuPathDB" id="HostDB:ENSBTAG00000016021"/>
<dbReference type="eggNOG" id="KOG1065">
    <property type="taxonomic scope" value="Eukaryota"/>
</dbReference>
<dbReference type="HOGENOM" id="CLU_000631_11_2_1"/>
<dbReference type="InParanoid" id="Q9MYM4"/>
<dbReference type="OMA" id="YKGAVWP"/>
<dbReference type="OrthoDB" id="5839090at2759"/>
<dbReference type="TreeFam" id="TF314577"/>
<dbReference type="Reactome" id="R-BTA-6798695">
    <property type="pathway name" value="Neutrophil degranulation"/>
</dbReference>
<dbReference type="Reactome" id="R-BTA-70221">
    <property type="pathway name" value="Glycogen breakdown (glycogenolysis)"/>
</dbReference>
<dbReference type="PRO" id="PR:Q9MYM4"/>
<dbReference type="Proteomes" id="UP000009136">
    <property type="component" value="Chromosome 19"/>
</dbReference>
<dbReference type="Bgee" id="ENSBTAG00000016021">
    <property type="expression patterns" value="Expressed in biceps femoris and 104 other cell types or tissues"/>
</dbReference>
<dbReference type="GO" id="GO:0005765">
    <property type="term" value="C:lysosomal membrane"/>
    <property type="evidence" value="ECO:0007669"/>
    <property type="project" value="UniProtKB-SubCell"/>
</dbReference>
<dbReference type="GO" id="GO:0004558">
    <property type="term" value="F:alpha-1,4-glucosidase activity"/>
    <property type="evidence" value="ECO:0000250"/>
    <property type="project" value="UniProtKB"/>
</dbReference>
<dbReference type="GO" id="GO:0030246">
    <property type="term" value="F:carbohydrate binding"/>
    <property type="evidence" value="ECO:0007669"/>
    <property type="project" value="InterPro"/>
</dbReference>
<dbReference type="GO" id="GO:0005980">
    <property type="term" value="P:glycogen catabolic process"/>
    <property type="evidence" value="ECO:0000250"/>
    <property type="project" value="UniProtKB"/>
</dbReference>
<dbReference type="GO" id="GO:0007040">
    <property type="term" value="P:lysosome organization"/>
    <property type="evidence" value="ECO:0000318"/>
    <property type="project" value="GO_Central"/>
</dbReference>
<dbReference type="CDD" id="cd06602">
    <property type="entry name" value="GH31_MGAM_SI_GAA"/>
    <property type="match status" value="1"/>
</dbReference>
<dbReference type="CDD" id="cd14752">
    <property type="entry name" value="GH31_N"/>
    <property type="match status" value="1"/>
</dbReference>
<dbReference type="CDD" id="cd00111">
    <property type="entry name" value="Trefoil"/>
    <property type="match status" value="1"/>
</dbReference>
<dbReference type="FunFam" id="4.10.110.10:FF:000007">
    <property type="entry name" value="Lysosomal alpha-glucosidase"/>
    <property type="match status" value="1"/>
</dbReference>
<dbReference type="FunFam" id="3.20.20.80:FF:000072">
    <property type="entry name" value="lysosomal alpha-glucosidase isoform X2"/>
    <property type="match status" value="1"/>
</dbReference>
<dbReference type="FunFam" id="2.60.40.1180:FF:000001">
    <property type="entry name" value="Maltase-glucoamylase, intestinal"/>
    <property type="match status" value="1"/>
</dbReference>
<dbReference type="FunFam" id="2.60.40.1180:FF:000005">
    <property type="entry name" value="Maltase-glucoamylase, intestinal"/>
    <property type="match status" value="1"/>
</dbReference>
<dbReference type="FunFam" id="2.60.40.1760:FF:000001">
    <property type="entry name" value="Maltase-glucoamylase, intestinal"/>
    <property type="match status" value="1"/>
</dbReference>
<dbReference type="Gene3D" id="3.20.20.80">
    <property type="entry name" value="Glycosidases"/>
    <property type="match status" value="1"/>
</dbReference>
<dbReference type="Gene3D" id="2.60.40.1760">
    <property type="entry name" value="glycosyl hydrolase (family 31)"/>
    <property type="match status" value="1"/>
</dbReference>
<dbReference type="Gene3D" id="2.60.40.1180">
    <property type="entry name" value="Golgi alpha-mannosidase II"/>
    <property type="match status" value="2"/>
</dbReference>
<dbReference type="Gene3D" id="4.10.110.10">
    <property type="entry name" value="Spasmolytic Protein, domain 1"/>
    <property type="match status" value="1"/>
</dbReference>
<dbReference type="InterPro" id="IPR011013">
    <property type="entry name" value="Gal_mutarotase_sf_dom"/>
</dbReference>
<dbReference type="InterPro" id="IPR030458">
    <property type="entry name" value="Glyco_hydro_31_AS"/>
</dbReference>
<dbReference type="InterPro" id="IPR048395">
    <property type="entry name" value="Glyco_hydro_31_C"/>
</dbReference>
<dbReference type="InterPro" id="IPR030459">
    <property type="entry name" value="Glyco_hydro_31_CS"/>
</dbReference>
<dbReference type="InterPro" id="IPR025887">
    <property type="entry name" value="Glyco_hydro_31_N_dom"/>
</dbReference>
<dbReference type="InterPro" id="IPR000322">
    <property type="entry name" value="Glyco_hydro_31_TIM"/>
</dbReference>
<dbReference type="InterPro" id="IPR013780">
    <property type="entry name" value="Glyco_hydro_b"/>
</dbReference>
<dbReference type="InterPro" id="IPR017853">
    <property type="entry name" value="Glycoside_hydrolase_SF"/>
</dbReference>
<dbReference type="InterPro" id="IPR017957">
    <property type="entry name" value="P_trefoil_CS"/>
</dbReference>
<dbReference type="InterPro" id="IPR000519">
    <property type="entry name" value="P_trefoil_dom"/>
</dbReference>
<dbReference type="InterPro" id="IPR044913">
    <property type="entry name" value="P_trefoil_dom_sf"/>
</dbReference>
<dbReference type="PANTHER" id="PTHR22762">
    <property type="entry name" value="ALPHA-GLUCOSIDASE"/>
    <property type="match status" value="1"/>
</dbReference>
<dbReference type="PANTHER" id="PTHR22762:SF92">
    <property type="entry name" value="LYSOSOMAL ALPHA-GLUCOSIDASE"/>
    <property type="match status" value="1"/>
</dbReference>
<dbReference type="Pfam" id="PF13802">
    <property type="entry name" value="Gal_mutarotas_2"/>
    <property type="match status" value="1"/>
</dbReference>
<dbReference type="Pfam" id="PF01055">
    <property type="entry name" value="Glyco_hydro_31_2nd"/>
    <property type="match status" value="1"/>
</dbReference>
<dbReference type="Pfam" id="PF21365">
    <property type="entry name" value="Glyco_hydro_31_3rd"/>
    <property type="match status" value="1"/>
</dbReference>
<dbReference type="Pfam" id="PF00088">
    <property type="entry name" value="Trefoil"/>
    <property type="match status" value="1"/>
</dbReference>
<dbReference type="SMART" id="SM00018">
    <property type="entry name" value="PD"/>
    <property type="match status" value="1"/>
</dbReference>
<dbReference type="SUPFAM" id="SSF51445">
    <property type="entry name" value="(Trans)glycosidases"/>
    <property type="match status" value="1"/>
</dbReference>
<dbReference type="SUPFAM" id="SSF74650">
    <property type="entry name" value="Galactose mutarotase-like"/>
    <property type="match status" value="1"/>
</dbReference>
<dbReference type="SUPFAM" id="SSF51011">
    <property type="entry name" value="Glycosyl hydrolase domain"/>
    <property type="match status" value="1"/>
</dbReference>
<dbReference type="SUPFAM" id="SSF57492">
    <property type="entry name" value="Trefoil"/>
    <property type="match status" value="1"/>
</dbReference>
<dbReference type="PROSITE" id="PS00129">
    <property type="entry name" value="GLYCOSYL_HYDROL_F31_1"/>
    <property type="match status" value="1"/>
</dbReference>
<dbReference type="PROSITE" id="PS00707">
    <property type="entry name" value="GLYCOSYL_HYDROL_F31_2"/>
    <property type="match status" value="1"/>
</dbReference>
<dbReference type="PROSITE" id="PS00025">
    <property type="entry name" value="P_TREFOIL_1"/>
    <property type="match status" value="1"/>
</dbReference>
<dbReference type="PROSITE" id="PS51448">
    <property type="entry name" value="P_TREFOIL_2"/>
    <property type="match status" value="1"/>
</dbReference>
<sequence>MMRWPPCSRPLLGVCTLLSLALLGHILLHDLEVVPRELRGFSQDEIHQACQPGASSPECRGSPRAAPTQCDLPPNSRFDCAPDKGITPQQCEARGCCYMPAEWPPDAQMGQPWCFFPPSYPSYRLENLTTTETGYTATLTRAVPTFFPKDIMTLRLDMLMETESRLHFTIKDPANRRYEVPLETPRVYSQAPFTLYSVEFSEEPFGVVVRRKLDGRVLLNTTVAPLFFADQFLQLSTSLPSQHITGLAEHLGSLMLSTNWTKITLWNRDIAPEPNVNLYGSHPFYLVLEDGGLAHGVFLLNSNAMDVVLQPSPALSWRSTGGILDVYIFLGPEPKSVVQQYLDVVGYPFMPPYWGLGFHLCRWGYSTSAITRQVVENMTRAYFPLDVQWNDLDYMDARRDFTFNKDHFGDFPAMVQELHQGGRRYIMIVDPAISSSGPAGTYRPYDEGLRRGVFITNETGQPLIGQVWPGLTAFPDFTNPETLDWWQDMVTEFHAQVPFDGMWIDMNEPSNFVRGSVDGCPDNSLENPPYLPGVVGGTLRAATICASSHQFLSTHYDLHNLYGLTEALASHRALVKARGMRPFVISRSTFAGHGRYSGHWTGDVWSNWEQLSYSVPEILLFNLLGVPLVGADICGFLGNTSEELCVRWTQLGAFYPFMRNHNALNSQPQEPYRFSETAQQAMRKAFTLRYVLLPYLYTLFHRAHVRGETVARPLFLEFPEDPSTWTVDRQLLWGEALLITPVLEAEKVEVTGYFPQGTWYDLQTVPMEAFGSLPPPAPLTSVIHSKGQWVTLSAPLDTINVHLRAGHIIPMQGPALTTTESRKQHMALAVALTASGEAQGELFWDDGESLGVLDGGDYTQLIFLAKNNTFVNKLVHVSSEGASLQLRNVTVLGVATAPQQVLCNSVPVSNFTFSPDTETLAIPVSLTMGEQFVISWS</sequence>
<comment type="function">
    <text evidence="2 6">Essential for the degradation of glycogen in lysosomes (PubMed:10723725). Has highest activity on alpha-1,4-linked glycosidic linkages, but can also hydrolyze alpha-1,6-linked glucans.</text>
</comment>
<comment type="catalytic activity">
    <reaction evidence="2">
        <text>Hydrolysis of terminal, non-reducing (1-&gt;4)-linked alpha-D-glucose residues with release of alpha-D-glucose.</text>
        <dbReference type="EC" id="3.2.1.20"/>
    </reaction>
</comment>
<comment type="subcellular location">
    <subcellularLocation>
        <location evidence="2">Lysosome</location>
    </subcellularLocation>
    <subcellularLocation>
        <location evidence="2">Lysosome membrane</location>
    </subcellularLocation>
</comment>
<comment type="disease">
    <text evidence="6">Defects in GAA are the cause of generalized glycogenosis. It is characterized by a accumulation of glycogen within lysosomes. This disease has been reported in Brahman and Shorthorn breeds. Its most common clinical representation is a failure to thrive, progressive muscular weakness and an un-coordinated gait.</text>
</comment>
<comment type="similarity">
    <text evidence="7">Belongs to the glycosyl hydrolase 31 family.</text>
</comment>
<proteinExistence type="evidence at transcript level"/>
<keyword id="KW-1015">Disulfide bond</keyword>
<keyword id="KW-0325">Glycoprotein</keyword>
<keyword id="KW-0326">Glycosidase</keyword>
<keyword id="KW-0378">Hydrolase</keyword>
<keyword id="KW-0458">Lysosome</keyword>
<keyword id="KW-0472">Membrane</keyword>
<keyword id="KW-1185">Reference proteome</keyword>
<keyword id="KW-0732">Signal</keyword>
<evidence type="ECO:0000250" key="1"/>
<evidence type="ECO:0000250" key="2">
    <source>
        <dbReference type="UniProtKB" id="P10253"/>
    </source>
</evidence>
<evidence type="ECO:0000255" key="3"/>
<evidence type="ECO:0000255" key="4">
    <source>
        <dbReference type="PROSITE-ProRule" id="PRU00779"/>
    </source>
</evidence>
<evidence type="ECO:0000255" key="5">
    <source>
        <dbReference type="PROSITE-ProRule" id="PRU10066"/>
    </source>
</evidence>
<evidence type="ECO:0000269" key="6">
    <source>
    </source>
</evidence>
<evidence type="ECO:0000305" key="7"/>